<name>TRPF_MAGMM</name>
<feature type="chain" id="PRO_1000018607" description="N-(5'-phosphoribosyl)anthranilate isomerase">
    <location>
        <begin position="1"/>
        <end position="210"/>
    </location>
</feature>
<organism>
    <name type="scientific">Magnetococcus marinus (strain ATCC BAA-1437 / JCM 17883 / MC-1)</name>
    <dbReference type="NCBI Taxonomy" id="156889"/>
    <lineage>
        <taxon>Bacteria</taxon>
        <taxon>Pseudomonadati</taxon>
        <taxon>Pseudomonadota</taxon>
        <taxon>Alphaproteobacteria</taxon>
        <taxon>Magnetococcales</taxon>
        <taxon>Magnetococcaceae</taxon>
        <taxon>Magnetococcus</taxon>
    </lineage>
</organism>
<keyword id="KW-0028">Amino-acid biosynthesis</keyword>
<keyword id="KW-0057">Aromatic amino acid biosynthesis</keyword>
<keyword id="KW-0413">Isomerase</keyword>
<keyword id="KW-1185">Reference proteome</keyword>
<keyword id="KW-0822">Tryptophan biosynthesis</keyword>
<proteinExistence type="inferred from homology"/>
<dbReference type="EC" id="5.3.1.24" evidence="1"/>
<dbReference type="EMBL" id="CP000471">
    <property type="protein sequence ID" value="ABK44831.1"/>
    <property type="molecule type" value="Genomic_DNA"/>
</dbReference>
<dbReference type="RefSeq" id="WP_011713952.1">
    <property type="nucleotide sequence ID" value="NC_008576.1"/>
</dbReference>
<dbReference type="SMR" id="A0LA38"/>
<dbReference type="STRING" id="156889.Mmc1_2331"/>
<dbReference type="KEGG" id="mgm:Mmc1_2331"/>
<dbReference type="eggNOG" id="COG0135">
    <property type="taxonomic scope" value="Bacteria"/>
</dbReference>
<dbReference type="HOGENOM" id="CLU_076364_2_0_5"/>
<dbReference type="OrthoDB" id="9796196at2"/>
<dbReference type="UniPathway" id="UPA00035">
    <property type="reaction ID" value="UER00042"/>
</dbReference>
<dbReference type="Proteomes" id="UP000002586">
    <property type="component" value="Chromosome"/>
</dbReference>
<dbReference type="GO" id="GO:0004640">
    <property type="term" value="F:phosphoribosylanthranilate isomerase activity"/>
    <property type="evidence" value="ECO:0007669"/>
    <property type="project" value="UniProtKB-UniRule"/>
</dbReference>
<dbReference type="GO" id="GO:0000162">
    <property type="term" value="P:L-tryptophan biosynthetic process"/>
    <property type="evidence" value="ECO:0007669"/>
    <property type="project" value="UniProtKB-UniRule"/>
</dbReference>
<dbReference type="CDD" id="cd00405">
    <property type="entry name" value="PRAI"/>
    <property type="match status" value="1"/>
</dbReference>
<dbReference type="FunFam" id="3.20.20.70:FF:000075">
    <property type="entry name" value="Tryptophan biosynthesis protein TRP1"/>
    <property type="match status" value="1"/>
</dbReference>
<dbReference type="Gene3D" id="3.20.20.70">
    <property type="entry name" value="Aldolase class I"/>
    <property type="match status" value="1"/>
</dbReference>
<dbReference type="HAMAP" id="MF_00135">
    <property type="entry name" value="PRAI"/>
    <property type="match status" value="1"/>
</dbReference>
<dbReference type="InterPro" id="IPR013785">
    <property type="entry name" value="Aldolase_TIM"/>
</dbReference>
<dbReference type="InterPro" id="IPR001240">
    <property type="entry name" value="PRAI_dom"/>
</dbReference>
<dbReference type="InterPro" id="IPR011060">
    <property type="entry name" value="RibuloseP-bd_barrel"/>
</dbReference>
<dbReference type="InterPro" id="IPR044643">
    <property type="entry name" value="TrpF_fam"/>
</dbReference>
<dbReference type="NCBIfam" id="NF002298">
    <property type="entry name" value="PRK01222.1-4"/>
    <property type="match status" value="1"/>
</dbReference>
<dbReference type="PANTHER" id="PTHR42894">
    <property type="entry name" value="N-(5'-PHOSPHORIBOSYL)ANTHRANILATE ISOMERASE"/>
    <property type="match status" value="1"/>
</dbReference>
<dbReference type="PANTHER" id="PTHR42894:SF1">
    <property type="entry name" value="N-(5'-PHOSPHORIBOSYL)ANTHRANILATE ISOMERASE"/>
    <property type="match status" value="1"/>
</dbReference>
<dbReference type="Pfam" id="PF00697">
    <property type="entry name" value="PRAI"/>
    <property type="match status" value="1"/>
</dbReference>
<dbReference type="SUPFAM" id="SSF51366">
    <property type="entry name" value="Ribulose-phoshate binding barrel"/>
    <property type="match status" value="1"/>
</dbReference>
<reference key="1">
    <citation type="journal article" date="2009" name="Appl. Environ. Microbiol.">
        <title>Complete genome sequence of the chemolithoautotrophic marine magnetotactic coccus strain MC-1.</title>
        <authorList>
            <person name="Schubbe S."/>
            <person name="Williams T.J."/>
            <person name="Xie G."/>
            <person name="Kiss H.E."/>
            <person name="Brettin T.S."/>
            <person name="Martinez D."/>
            <person name="Ross C.A."/>
            <person name="Schuler D."/>
            <person name="Cox B.L."/>
            <person name="Nealson K.H."/>
            <person name="Bazylinski D.A."/>
        </authorList>
    </citation>
    <scope>NUCLEOTIDE SEQUENCE [LARGE SCALE GENOMIC DNA]</scope>
    <source>
        <strain>ATCC BAA-1437 / JCM 17883 / MC-1</strain>
    </source>
</reference>
<accession>A0LA38</accession>
<sequence>MAVKIKICGITSLADAWAAHDAGADAMGLVFYPGSPRAVTPQQVAQWRGDLPPFMTVVGLFVNATAQWIASTTALCSLDRIQLHGDESPAQCRAWGARAIRAIRVAEAADLHDLARWPVGALLLDAKIKGSYGGTGACFDWQLLGQAELPKPWILAGGLDPDNVEAAVRQVQPYGVDVSSGVESAPGKKDHNKMHRFVAAVRRAQDGAGL</sequence>
<comment type="catalytic activity">
    <reaction evidence="1">
        <text>N-(5-phospho-beta-D-ribosyl)anthranilate = 1-(2-carboxyphenylamino)-1-deoxy-D-ribulose 5-phosphate</text>
        <dbReference type="Rhea" id="RHEA:21540"/>
        <dbReference type="ChEBI" id="CHEBI:18277"/>
        <dbReference type="ChEBI" id="CHEBI:58613"/>
        <dbReference type="EC" id="5.3.1.24"/>
    </reaction>
</comment>
<comment type="pathway">
    <text evidence="1">Amino-acid biosynthesis; L-tryptophan biosynthesis; L-tryptophan from chorismate: step 3/5.</text>
</comment>
<comment type="similarity">
    <text evidence="1">Belongs to the TrpF family.</text>
</comment>
<gene>
    <name evidence="1" type="primary">trpF</name>
    <name type="ordered locus">Mmc1_2331</name>
</gene>
<evidence type="ECO:0000255" key="1">
    <source>
        <dbReference type="HAMAP-Rule" id="MF_00135"/>
    </source>
</evidence>
<protein>
    <recommendedName>
        <fullName evidence="1">N-(5'-phosphoribosyl)anthranilate isomerase</fullName>
        <shortName evidence="1">PRAI</shortName>
        <ecNumber evidence="1">5.3.1.24</ecNumber>
    </recommendedName>
</protein>